<protein>
    <recommendedName>
        <fullName evidence="1">UDP-N-acetylglucosamine--N-acetylmuramyl-(pentapeptide) pyrophosphoryl-undecaprenol N-acetylglucosamine transferase</fullName>
        <ecNumber evidence="1">2.4.1.227</ecNumber>
    </recommendedName>
    <alternativeName>
        <fullName evidence="1">Undecaprenyl-PP-MurNAc-pentapeptide-UDPGlcNAc GlcNAc transferase</fullName>
    </alternativeName>
</protein>
<comment type="function">
    <text evidence="1">Cell wall formation. Catalyzes the transfer of a GlcNAc subunit on undecaprenyl-pyrophosphoryl-MurNAc-pentapeptide (lipid intermediate I) to form undecaprenyl-pyrophosphoryl-MurNAc-(pentapeptide)GlcNAc (lipid intermediate II).</text>
</comment>
<comment type="catalytic activity">
    <reaction evidence="1">
        <text>di-trans,octa-cis-undecaprenyl diphospho-N-acetyl-alpha-D-muramoyl-L-alanyl-D-glutamyl-meso-2,6-diaminopimeloyl-D-alanyl-D-alanine + UDP-N-acetyl-alpha-D-glucosamine = di-trans,octa-cis-undecaprenyl diphospho-[N-acetyl-alpha-D-glucosaminyl-(1-&gt;4)]-N-acetyl-alpha-D-muramoyl-L-alanyl-D-glutamyl-meso-2,6-diaminopimeloyl-D-alanyl-D-alanine + UDP + H(+)</text>
        <dbReference type="Rhea" id="RHEA:31227"/>
        <dbReference type="ChEBI" id="CHEBI:15378"/>
        <dbReference type="ChEBI" id="CHEBI:57705"/>
        <dbReference type="ChEBI" id="CHEBI:58223"/>
        <dbReference type="ChEBI" id="CHEBI:61387"/>
        <dbReference type="ChEBI" id="CHEBI:61388"/>
        <dbReference type="EC" id="2.4.1.227"/>
    </reaction>
</comment>
<comment type="pathway">
    <text evidence="1">Cell wall biogenesis; peptidoglycan biosynthesis.</text>
</comment>
<comment type="subcellular location">
    <subcellularLocation>
        <location evidence="1">Cell membrane</location>
        <topology evidence="1">Peripheral membrane protein</topology>
        <orientation evidence="1">Cytoplasmic side</orientation>
    </subcellularLocation>
</comment>
<comment type="similarity">
    <text evidence="1">Belongs to the glycosyltransferase 28 family. MurG subfamily.</text>
</comment>
<accession>Q1IXV9</accession>
<feature type="chain" id="PRO_0000315089" description="UDP-N-acetylglucosamine--N-acetylmuramyl-(pentapeptide) pyrophosphoryl-undecaprenol N-acetylglucosamine transferase">
    <location>
        <begin position="1"/>
        <end position="361"/>
    </location>
</feature>
<feature type="binding site" evidence="1">
    <location>
        <begin position="11"/>
        <end position="13"/>
    </location>
    <ligand>
        <name>UDP-N-acetyl-alpha-D-glucosamine</name>
        <dbReference type="ChEBI" id="CHEBI:57705"/>
    </ligand>
</feature>
<feature type="binding site" evidence="1">
    <location>
        <position position="124"/>
    </location>
    <ligand>
        <name>UDP-N-acetyl-alpha-D-glucosamine</name>
        <dbReference type="ChEBI" id="CHEBI:57705"/>
    </ligand>
</feature>
<feature type="binding site" evidence="1">
    <location>
        <position position="164"/>
    </location>
    <ligand>
        <name>UDP-N-acetyl-alpha-D-glucosamine</name>
        <dbReference type="ChEBI" id="CHEBI:57705"/>
    </ligand>
</feature>
<feature type="binding site" evidence="1">
    <location>
        <position position="192"/>
    </location>
    <ligand>
        <name>UDP-N-acetyl-alpha-D-glucosamine</name>
        <dbReference type="ChEBI" id="CHEBI:57705"/>
    </ligand>
</feature>
<feature type="binding site" evidence="1">
    <location>
        <position position="295"/>
    </location>
    <ligand>
        <name>UDP-N-acetyl-alpha-D-glucosamine</name>
        <dbReference type="ChEBI" id="CHEBI:57705"/>
    </ligand>
</feature>
<organism>
    <name type="scientific">Deinococcus geothermalis (strain DSM 11300 / CIP 105573 / AG-3a)</name>
    <dbReference type="NCBI Taxonomy" id="319795"/>
    <lineage>
        <taxon>Bacteria</taxon>
        <taxon>Thermotogati</taxon>
        <taxon>Deinococcota</taxon>
        <taxon>Deinococci</taxon>
        <taxon>Deinococcales</taxon>
        <taxon>Deinococcaceae</taxon>
        <taxon>Deinococcus</taxon>
    </lineage>
</organism>
<name>MURG_DEIGD</name>
<keyword id="KW-0131">Cell cycle</keyword>
<keyword id="KW-0132">Cell division</keyword>
<keyword id="KW-1003">Cell membrane</keyword>
<keyword id="KW-0133">Cell shape</keyword>
<keyword id="KW-0961">Cell wall biogenesis/degradation</keyword>
<keyword id="KW-0328">Glycosyltransferase</keyword>
<keyword id="KW-0472">Membrane</keyword>
<keyword id="KW-0573">Peptidoglycan synthesis</keyword>
<keyword id="KW-0808">Transferase</keyword>
<evidence type="ECO:0000255" key="1">
    <source>
        <dbReference type="HAMAP-Rule" id="MF_00033"/>
    </source>
</evidence>
<gene>
    <name evidence="1" type="primary">murG</name>
    <name type="ordered locus">Dgeo_1630</name>
</gene>
<sequence length="361" mass="37550">MSLIVMATGGTGGHIYPAVAVSRELLARGHEAVLLGQRGGMEERVAAEQGLPFQGVNAGKLARSGQGRPDPRELLRAARGVAEARAFLRDARPGAVVGFGGFASLPGVLAAQTLGIPTVLHEQNARLGLTQRLAAGRARAVGTAYPHVLGLPEGKATLVGMPVREERLPRAEALAQLGLQDGPLTLLVMGGSQGSLALNHAVPDILREIFGPEGRAPEGPVQVLHATGPRWLAEVAPRVADLPWYKPVGYTNAVAAWSAADLAITRAGTGTLAEAAFHGVPLVMVPLPESAENHQYHNAVSVQEAGAGRVVEQEQLRGALGAAVLECAAAGTRAAMRKAAFLRSPVGAASRFADLVERHLR</sequence>
<proteinExistence type="inferred from homology"/>
<reference key="1">
    <citation type="submission" date="2006-04" db="EMBL/GenBank/DDBJ databases">
        <title>Complete sequence of chromosome of Deinococcus geothermalis DSM 11300.</title>
        <authorList>
            <person name="Copeland A."/>
            <person name="Lucas S."/>
            <person name="Lapidus A."/>
            <person name="Barry K."/>
            <person name="Detter J.C."/>
            <person name="Glavina del Rio T."/>
            <person name="Hammon N."/>
            <person name="Israni S."/>
            <person name="Dalin E."/>
            <person name="Tice H."/>
            <person name="Pitluck S."/>
            <person name="Brettin T."/>
            <person name="Bruce D."/>
            <person name="Han C."/>
            <person name="Tapia R."/>
            <person name="Saunders E."/>
            <person name="Gilna P."/>
            <person name="Schmutz J."/>
            <person name="Larimer F."/>
            <person name="Land M."/>
            <person name="Hauser L."/>
            <person name="Kyrpides N."/>
            <person name="Kim E."/>
            <person name="Daly M.J."/>
            <person name="Fredrickson J.K."/>
            <person name="Makarova K.S."/>
            <person name="Gaidamakova E.K."/>
            <person name="Zhai M."/>
            <person name="Richardson P."/>
        </authorList>
    </citation>
    <scope>NUCLEOTIDE SEQUENCE [LARGE SCALE GENOMIC DNA]</scope>
    <source>
        <strain>DSM 11300 / CIP 105573 / AG-3a</strain>
    </source>
</reference>
<dbReference type="EC" id="2.4.1.227" evidence="1"/>
<dbReference type="EMBL" id="CP000359">
    <property type="protein sequence ID" value="ABF45925.1"/>
    <property type="molecule type" value="Genomic_DNA"/>
</dbReference>
<dbReference type="RefSeq" id="WP_011530759.1">
    <property type="nucleotide sequence ID" value="NC_008025.1"/>
</dbReference>
<dbReference type="SMR" id="Q1IXV9"/>
<dbReference type="STRING" id="319795.Dgeo_1630"/>
<dbReference type="CAZy" id="GT28">
    <property type="family name" value="Glycosyltransferase Family 28"/>
</dbReference>
<dbReference type="KEGG" id="dge:Dgeo_1630"/>
<dbReference type="eggNOG" id="COG0707">
    <property type="taxonomic scope" value="Bacteria"/>
</dbReference>
<dbReference type="HOGENOM" id="CLU_037404_1_0_0"/>
<dbReference type="UniPathway" id="UPA00219"/>
<dbReference type="Proteomes" id="UP000002431">
    <property type="component" value="Chromosome"/>
</dbReference>
<dbReference type="GO" id="GO:0005886">
    <property type="term" value="C:plasma membrane"/>
    <property type="evidence" value="ECO:0007669"/>
    <property type="project" value="UniProtKB-SubCell"/>
</dbReference>
<dbReference type="GO" id="GO:0051991">
    <property type="term" value="F:UDP-N-acetyl-D-glucosamine:N-acetylmuramoyl-L-alanyl-D-glutamyl-meso-2,6-diaminopimelyl-D-alanyl-D-alanine-diphosphoundecaprenol 4-beta-N-acetylglucosaminlytransferase activity"/>
    <property type="evidence" value="ECO:0007669"/>
    <property type="project" value="RHEA"/>
</dbReference>
<dbReference type="GO" id="GO:0050511">
    <property type="term" value="F:undecaprenyldiphospho-muramoylpentapeptide beta-N-acetylglucosaminyltransferase activity"/>
    <property type="evidence" value="ECO:0007669"/>
    <property type="project" value="UniProtKB-UniRule"/>
</dbReference>
<dbReference type="GO" id="GO:0005975">
    <property type="term" value="P:carbohydrate metabolic process"/>
    <property type="evidence" value="ECO:0007669"/>
    <property type="project" value="InterPro"/>
</dbReference>
<dbReference type="GO" id="GO:0051301">
    <property type="term" value="P:cell division"/>
    <property type="evidence" value="ECO:0007669"/>
    <property type="project" value="UniProtKB-KW"/>
</dbReference>
<dbReference type="GO" id="GO:0071555">
    <property type="term" value="P:cell wall organization"/>
    <property type="evidence" value="ECO:0007669"/>
    <property type="project" value="UniProtKB-KW"/>
</dbReference>
<dbReference type="GO" id="GO:0030259">
    <property type="term" value="P:lipid glycosylation"/>
    <property type="evidence" value="ECO:0007669"/>
    <property type="project" value="UniProtKB-UniRule"/>
</dbReference>
<dbReference type="GO" id="GO:0009252">
    <property type="term" value="P:peptidoglycan biosynthetic process"/>
    <property type="evidence" value="ECO:0007669"/>
    <property type="project" value="UniProtKB-UniRule"/>
</dbReference>
<dbReference type="GO" id="GO:0008360">
    <property type="term" value="P:regulation of cell shape"/>
    <property type="evidence" value="ECO:0007669"/>
    <property type="project" value="UniProtKB-KW"/>
</dbReference>
<dbReference type="CDD" id="cd03785">
    <property type="entry name" value="GT28_MurG"/>
    <property type="match status" value="1"/>
</dbReference>
<dbReference type="Gene3D" id="3.40.50.2000">
    <property type="entry name" value="Glycogen Phosphorylase B"/>
    <property type="match status" value="2"/>
</dbReference>
<dbReference type="HAMAP" id="MF_00033">
    <property type="entry name" value="MurG"/>
    <property type="match status" value="1"/>
</dbReference>
<dbReference type="InterPro" id="IPR006009">
    <property type="entry name" value="GlcNAc_MurG"/>
</dbReference>
<dbReference type="InterPro" id="IPR007235">
    <property type="entry name" value="Glyco_trans_28_C"/>
</dbReference>
<dbReference type="InterPro" id="IPR004276">
    <property type="entry name" value="GlycoTrans_28_N"/>
</dbReference>
<dbReference type="NCBIfam" id="TIGR01133">
    <property type="entry name" value="murG"/>
    <property type="match status" value="1"/>
</dbReference>
<dbReference type="PANTHER" id="PTHR21015:SF22">
    <property type="entry name" value="GLYCOSYLTRANSFERASE"/>
    <property type="match status" value="1"/>
</dbReference>
<dbReference type="PANTHER" id="PTHR21015">
    <property type="entry name" value="UDP-N-ACETYLGLUCOSAMINE--N-ACETYLMURAMYL-(PENTAPEPTIDE) PYROPHOSPHORYL-UNDECAPRENOL N-ACETYLGLUCOSAMINE TRANSFERASE 1"/>
    <property type="match status" value="1"/>
</dbReference>
<dbReference type="Pfam" id="PF04101">
    <property type="entry name" value="Glyco_tran_28_C"/>
    <property type="match status" value="1"/>
</dbReference>
<dbReference type="Pfam" id="PF03033">
    <property type="entry name" value="Glyco_transf_28"/>
    <property type="match status" value="1"/>
</dbReference>
<dbReference type="SUPFAM" id="SSF53756">
    <property type="entry name" value="UDP-Glycosyltransferase/glycogen phosphorylase"/>
    <property type="match status" value="1"/>
</dbReference>